<comment type="function">
    <text evidence="1">May act as a transcriptional activator that promotes transcription of muscle-specific target genes and plays a role in muscle differentiation.</text>
</comment>
<comment type="subunit">
    <text evidence="1">Efficient DNA binding requires dimerization with another bHLH protein.</text>
</comment>
<comment type="subcellular location">
    <subcellularLocation>
        <location evidence="2">Nucleus</location>
    </subcellularLocation>
</comment>
<comment type="alternative products">
    <event type="alternative splicing"/>
    <isoform>
        <id>Q6Q2A8-1</id>
        <name>1</name>
        <name>TmyoD1-beta</name>
        <sequence type="displayed"/>
    </isoform>
    <isoform>
        <id>Q6Q2A8-2</id>
        <name>2</name>
        <name>TmyoD1-alpha</name>
        <sequence type="described" ref="VSP_024457"/>
    </isoform>
    <isoform>
        <id>Q6Q2A8-3</id>
        <name>3</name>
        <name>TmyoD1-gamma</name>
        <sequence type="described" ref="VSP_024455 VSP_024456"/>
    </isoform>
</comment>
<comment type="tissue specificity">
    <text evidence="4">Expressed in fast and myotomal muscle. Very weak expression in brain, skin and gonads.</text>
</comment>
<comment type="miscellaneous">
    <molecule>Isoform 2</molecule>
    <text evidence="7">Most abundant isoform.</text>
</comment>
<comment type="miscellaneous">
    <molecule>Isoform 3</molecule>
    <text evidence="7">May be produced at very low levels due to a premature stop codon in the mRNA, leading to nonsense-mediated mRNA decay.</text>
</comment>
<name>MYOD1_TAKRU</name>
<sequence length="307" mass="33630">MELSEISFSIPAADDFYDDPCFSTSDMHFFEDMDPRLVHAGLLKPDDCCSSSSLSPSSSSASPSSLLHIHHHTEAEDDEHIRAPSGHHHAGRCLLWACKACKRKTTNVDRRKAATLRERRRLSKVNEAFETLKRCTNTNPNQRLPKVEILRNAISYIESLQALLRGGQDEAFYTVLEHYSGDSDASSPRSNCSDGMTDFNGPTCQSNRRGSYYSSYFSQTPKAFAPPGSAIFVPPGSVNNCSAWFCFAGSLKAERNSSLDCLSSIVERISTATSSGPPPVDGRGSPGPLQASSPRSSREPNLIYQVL</sequence>
<evidence type="ECO:0000250" key="1"/>
<evidence type="ECO:0000255" key="2">
    <source>
        <dbReference type="PROSITE-ProRule" id="PRU00981"/>
    </source>
</evidence>
<evidence type="ECO:0000256" key="3">
    <source>
        <dbReference type="SAM" id="MobiDB-lite"/>
    </source>
</evidence>
<evidence type="ECO:0000269" key="4">
    <source>
    </source>
</evidence>
<evidence type="ECO:0000303" key="5">
    <source>
    </source>
</evidence>
<evidence type="ECO:0000303" key="6">
    <source ref="2"/>
</evidence>
<evidence type="ECO:0000305" key="7"/>
<dbReference type="EMBL" id="AY566281">
    <property type="protein sequence ID" value="AAS76647.1"/>
    <property type="molecule type" value="Genomic_DNA"/>
</dbReference>
<dbReference type="EMBL" id="AY445315">
    <property type="protein sequence ID" value="AAR39413.1"/>
    <property type="molecule type" value="mRNA"/>
</dbReference>
<dbReference type="EMBL" id="AY445316">
    <property type="protein sequence ID" value="AAR39414.1"/>
    <property type="molecule type" value="mRNA"/>
</dbReference>
<dbReference type="EMBL" id="AY445317">
    <property type="protein sequence ID" value="AAR39415.1"/>
    <property type="molecule type" value="mRNA"/>
</dbReference>
<dbReference type="EMBL" id="AB235116">
    <property type="protein sequence ID" value="BAE79389.1"/>
    <property type="molecule type" value="mRNA"/>
</dbReference>
<dbReference type="RefSeq" id="NP_001027941.1">
    <molecule id="Q6Q2A8-3"/>
    <property type="nucleotide sequence ID" value="NM_001032769.1"/>
</dbReference>
<dbReference type="SMR" id="Q6Q2A8"/>
<dbReference type="FunCoup" id="Q6Q2A8">
    <property type="interactions" value="125"/>
</dbReference>
<dbReference type="STRING" id="31033.ENSTRUP00000042483"/>
<dbReference type="Ensembl" id="ENSTRUT00000042627.3">
    <molecule id="Q6Q2A8-2"/>
    <property type="protein sequence ID" value="ENSTRUP00000042483.1"/>
    <property type="gene ID" value="ENSTRUG00000016609.3"/>
</dbReference>
<dbReference type="GeneID" id="446036"/>
<dbReference type="KEGG" id="tru:446036"/>
<dbReference type="CTD" id="4654"/>
<dbReference type="eggNOG" id="KOG3960">
    <property type="taxonomic scope" value="Eukaryota"/>
</dbReference>
<dbReference type="GeneTree" id="ENSGT00950000182959"/>
<dbReference type="InParanoid" id="Q6Q2A8"/>
<dbReference type="OMA" id="GPMEMTE"/>
<dbReference type="OrthoDB" id="10049614at2759"/>
<dbReference type="TreeFam" id="TF316344"/>
<dbReference type="Proteomes" id="UP000005226">
    <property type="component" value="Chromosome 9"/>
</dbReference>
<dbReference type="GO" id="GO:0005634">
    <property type="term" value="C:nucleus"/>
    <property type="evidence" value="ECO:0007669"/>
    <property type="project" value="UniProtKB-SubCell"/>
</dbReference>
<dbReference type="GO" id="GO:0000981">
    <property type="term" value="F:DNA-binding transcription factor activity, RNA polymerase II-specific"/>
    <property type="evidence" value="ECO:0007669"/>
    <property type="project" value="TreeGrafter"/>
</dbReference>
<dbReference type="GO" id="GO:1990841">
    <property type="term" value="F:promoter-specific chromatin binding"/>
    <property type="evidence" value="ECO:0000250"/>
    <property type="project" value="UniProtKB"/>
</dbReference>
<dbReference type="GO" id="GO:0046983">
    <property type="term" value="F:protein dimerization activity"/>
    <property type="evidence" value="ECO:0007669"/>
    <property type="project" value="InterPro"/>
</dbReference>
<dbReference type="GO" id="GO:0000978">
    <property type="term" value="F:RNA polymerase II cis-regulatory region sequence-specific DNA binding"/>
    <property type="evidence" value="ECO:0007669"/>
    <property type="project" value="TreeGrafter"/>
</dbReference>
<dbReference type="GO" id="GO:0045663">
    <property type="term" value="P:positive regulation of myoblast differentiation"/>
    <property type="evidence" value="ECO:0007669"/>
    <property type="project" value="TreeGrafter"/>
</dbReference>
<dbReference type="GO" id="GO:0048743">
    <property type="term" value="P:positive regulation of skeletal muscle fiber development"/>
    <property type="evidence" value="ECO:0007669"/>
    <property type="project" value="TreeGrafter"/>
</dbReference>
<dbReference type="GO" id="GO:1905382">
    <property type="term" value="P:positive regulation of snRNA transcription by RNA polymerase II"/>
    <property type="evidence" value="ECO:0000250"/>
    <property type="project" value="UniProtKB"/>
</dbReference>
<dbReference type="GO" id="GO:0035914">
    <property type="term" value="P:skeletal muscle cell differentiation"/>
    <property type="evidence" value="ECO:0007669"/>
    <property type="project" value="TreeGrafter"/>
</dbReference>
<dbReference type="CDD" id="cd18936">
    <property type="entry name" value="bHLH_TS_MYOD1_Myf3"/>
    <property type="match status" value="1"/>
</dbReference>
<dbReference type="FunFam" id="4.10.280.10:FF:000005">
    <property type="entry name" value="Myogenic factor"/>
    <property type="match status" value="1"/>
</dbReference>
<dbReference type="Gene3D" id="4.10.280.10">
    <property type="entry name" value="Helix-loop-helix DNA-binding domain"/>
    <property type="match status" value="1"/>
</dbReference>
<dbReference type="InterPro" id="IPR011598">
    <property type="entry name" value="bHLH_dom"/>
</dbReference>
<dbReference type="InterPro" id="IPR036638">
    <property type="entry name" value="HLH_DNA-bd_sf"/>
</dbReference>
<dbReference type="InterPro" id="IPR022032">
    <property type="entry name" value="Myf5"/>
</dbReference>
<dbReference type="InterPro" id="IPR002546">
    <property type="entry name" value="MyoD_N"/>
</dbReference>
<dbReference type="InterPro" id="IPR039704">
    <property type="entry name" value="Myogenic_factor"/>
</dbReference>
<dbReference type="PANTHER" id="PTHR11534:SF2">
    <property type="entry name" value="MYOBLAST DETERMINATION PROTEIN 1"/>
    <property type="match status" value="1"/>
</dbReference>
<dbReference type="PANTHER" id="PTHR11534">
    <property type="entry name" value="MYOGENIC FACTOR"/>
    <property type="match status" value="1"/>
</dbReference>
<dbReference type="Pfam" id="PF01586">
    <property type="entry name" value="Basic"/>
    <property type="match status" value="1"/>
</dbReference>
<dbReference type="Pfam" id="PF00010">
    <property type="entry name" value="HLH"/>
    <property type="match status" value="1"/>
</dbReference>
<dbReference type="Pfam" id="PF12232">
    <property type="entry name" value="Myf5"/>
    <property type="match status" value="1"/>
</dbReference>
<dbReference type="SMART" id="SM00520">
    <property type="entry name" value="BASIC"/>
    <property type="match status" value="1"/>
</dbReference>
<dbReference type="SMART" id="SM00353">
    <property type="entry name" value="HLH"/>
    <property type="match status" value="1"/>
</dbReference>
<dbReference type="SUPFAM" id="SSF47459">
    <property type="entry name" value="HLH, helix-loop-helix DNA-binding domain"/>
    <property type="match status" value="1"/>
</dbReference>
<dbReference type="PROSITE" id="PS50888">
    <property type="entry name" value="BHLH"/>
    <property type="match status" value="1"/>
</dbReference>
<feature type="chain" id="PRO_0000284129" description="Myoblast determination protein 1 homolog">
    <location>
        <begin position="1"/>
        <end position="307"/>
    </location>
</feature>
<feature type="domain" description="bHLH" evidence="2">
    <location>
        <begin position="109"/>
        <end position="160"/>
    </location>
</feature>
<feature type="region of interest" description="Disordered" evidence="3">
    <location>
        <begin position="271"/>
        <end position="307"/>
    </location>
</feature>
<feature type="splice variant" id="VSP_024455" description="In isoform 3." evidence="5">
    <original>TDFNGPTCQSN</original>
    <variation>VGPGPGGINVH</variation>
    <location>
        <begin position="197"/>
        <end position="207"/>
    </location>
</feature>
<feature type="splice variant" id="VSP_024456" description="In isoform 3." evidence="5">
    <location>
        <begin position="208"/>
        <end position="307"/>
    </location>
</feature>
<feature type="splice variant" id="VSP_024457" description="In isoform 2." evidence="5 6">
    <location>
        <begin position="223"/>
        <end position="248"/>
    </location>
</feature>
<feature type="sequence conflict" description="In Ref. 2; BAE79389." evidence="7" ref="2">
    <original>T</original>
    <variation>K</variation>
    <location>
        <position position="136"/>
    </location>
</feature>
<feature type="sequence conflict" description="In Ref. 2; BAE79389." evidence="7" ref="2">
    <original>V</original>
    <variation>G</variation>
    <location>
        <position position="147"/>
    </location>
</feature>
<keyword id="KW-0010">Activator</keyword>
<keyword id="KW-0025">Alternative splicing</keyword>
<keyword id="KW-0217">Developmental protein</keyword>
<keyword id="KW-0221">Differentiation</keyword>
<keyword id="KW-0238">DNA-binding</keyword>
<keyword id="KW-0517">Myogenesis</keyword>
<keyword id="KW-0539">Nucleus</keyword>
<keyword id="KW-1185">Reference proteome</keyword>
<keyword id="KW-0804">Transcription</keyword>
<keyword id="KW-0805">Transcription regulation</keyword>
<protein>
    <recommendedName>
        <fullName>Myoblast determination protein 1 homolog</fullName>
    </recommendedName>
    <alternativeName>
        <fullName>Myogenic factor 1</fullName>
    </alternativeName>
    <alternativeName>
        <fullName>TmyoD1</fullName>
    </alternativeName>
</protein>
<accession>Q6Q2A8</accession>
<accession>Q2HWR0</accession>
<accession>Q6SYV8</accession>
<accession>Q6SYW0</accession>
<gene>
    <name type="primary">myod</name>
</gene>
<reference key="1">
    <citation type="journal article" date="2007" name="Gene">
        <title>Differential regulation of multiple alternatively spliced transcripts of MyoD.</title>
        <authorList>
            <person name="Fernandes J.M."/>
            <person name="Kinghorn J.R."/>
            <person name="Johnston I.A."/>
        </authorList>
    </citation>
    <scope>NUCLEOTIDE SEQUENCE [GENOMIC DNA / MRNA] (ISOFORMS 1; 2 AND 3)</scope>
    <scope>TISSUE SPECIFICITY</scope>
</reference>
<reference key="2">
    <citation type="submission" date="2005-09" db="EMBL/GenBank/DDBJ databases">
        <title>Evolutionary lineage of the fish myosin heavy chain gene family different from the tetrapod counterpart: evidence by comparative analysis based on torafugu Takifugu rubripes genome database.</title>
        <authorList>
            <person name="Ikeda D."/>
            <person name="Ono Y."/>
            <person name="Snell P."/>
            <person name="Edwards Y.J."/>
            <person name="Elgar G."/>
            <person name="Watabe S."/>
        </authorList>
    </citation>
    <scope>NUCLEOTIDE SEQUENCE [MRNA] (ISOFORM 2)</scope>
</reference>
<organism>
    <name type="scientific">Takifugu rubripes</name>
    <name type="common">Japanese pufferfish</name>
    <name type="synonym">Fugu rubripes</name>
    <dbReference type="NCBI Taxonomy" id="31033"/>
    <lineage>
        <taxon>Eukaryota</taxon>
        <taxon>Metazoa</taxon>
        <taxon>Chordata</taxon>
        <taxon>Craniata</taxon>
        <taxon>Vertebrata</taxon>
        <taxon>Euteleostomi</taxon>
        <taxon>Actinopterygii</taxon>
        <taxon>Neopterygii</taxon>
        <taxon>Teleostei</taxon>
        <taxon>Neoteleostei</taxon>
        <taxon>Acanthomorphata</taxon>
        <taxon>Eupercaria</taxon>
        <taxon>Tetraodontiformes</taxon>
        <taxon>Tetradontoidea</taxon>
        <taxon>Tetraodontidae</taxon>
        <taxon>Takifugu</taxon>
    </lineage>
</organism>
<proteinExistence type="evidence at transcript level"/>